<name>VF118_IIV3</name>
<proteinExistence type="inferred from homology"/>
<evidence type="ECO:0000255" key="1"/>
<evidence type="ECO:0000305" key="2"/>
<gene>
    <name type="ORF">IIV3-006R</name>
</gene>
<comment type="subcellular location">
    <subcellularLocation>
        <location evidence="2">Membrane</location>
        <topology evidence="2">Multi-pass membrane protein</topology>
    </subcellularLocation>
</comment>
<comment type="similarity">
    <text evidence="2">Belongs to the IIV-6 118L/458R family.</text>
</comment>
<accession>Q197F4</accession>
<keyword id="KW-0449">Lipoprotein</keyword>
<keyword id="KW-0472">Membrane</keyword>
<keyword id="KW-0519">Myristate</keyword>
<keyword id="KW-1185">Reference proteome</keyword>
<keyword id="KW-0812">Transmembrane</keyword>
<keyword id="KW-1133">Transmembrane helix</keyword>
<dbReference type="EMBL" id="DQ643392">
    <property type="protein sequence ID" value="ABF82036.1"/>
    <property type="molecule type" value="Genomic_DNA"/>
</dbReference>
<dbReference type="RefSeq" id="YP_654578.1">
    <property type="nucleotide sequence ID" value="NC_008187.1"/>
</dbReference>
<dbReference type="SMR" id="Q197F4"/>
<dbReference type="KEGG" id="vg:4156255"/>
<dbReference type="OrthoDB" id="8902at10239"/>
<dbReference type="Proteomes" id="UP000001358">
    <property type="component" value="Genome"/>
</dbReference>
<dbReference type="GO" id="GO:0016020">
    <property type="term" value="C:membrane"/>
    <property type="evidence" value="ECO:0007669"/>
    <property type="project" value="UniProtKB-SubCell"/>
</dbReference>
<dbReference type="InterPro" id="IPR003472">
    <property type="entry name" value="Virion_mem_poxvirus_L1"/>
</dbReference>
<dbReference type="Pfam" id="PF02442">
    <property type="entry name" value="L1R_F9L"/>
    <property type="match status" value="1"/>
</dbReference>
<organismHost>
    <name type="scientific">Aedes vexans</name>
    <name type="common">Inland floodwater mosquito</name>
    <name type="synonym">Culex vexans</name>
    <dbReference type="NCBI Taxonomy" id="7163"/>
</organismHost>
<organismHost>
    <name type="scientific">Culex territans</name>
    <dbReference type="NCBI Taxonomy" id="42431"/>
</organismHost>
<organismHost>
    <name type="scientific">Culiseta annulata</name>
    <dbReference type="NCBI Taxonomy" id="332058"/>
</organismHost>
<organismHost>
    <name type="scientific">Ochlerotatus sollicitans</name>
    <name type="common">eastern saltmarsh mosquito</name>
    <dbReference type="NCBI Taxonomy" id="310513"/>
</organismHost>
<organismHost>
    <name type="scientific">Ochlerotatus taeniorhynchus</name>
    <name type="common">Black salt marsh mosquito</name>
    <name type="synonym">Aedes taeniorhynchus</name>
    <dbReference type="NCBI Taxonomy" id="329105"/>
</organismHost>
<organismHost>
    <name type="scientific">Psorophora ferox</name>
    <dbReference type="NCBI Taxonomy" id="7183"/>
</organismHost>
<reference key="1">
    <citation type="journal article" date="2006" name="J. Virol.">
        <title>Genome of invertebrate iridescent virus type 3 (mosquito iridescent virus).</title>
        <authorList>
            <person name="Delhon G."/>
            <person name="Tulman E.R."/>
            <person name="Afonso C.L."/>
            <person name="Lu Z."/>
            <person name="Becnel J.J."/>
            <person name="Moser B.A."/>
            <person name="Kutish G.F."/>
            <person name="Rock D.L."/>
        </authorList>
    </citation>
    <scope>NUCLEOTIDE SEQUENCE [LARGE SCALE GENOMIC DNA]</scope>
</reference>
<protein>
    <recommendedName>
        <fullName>Putative myristoylated protein 006R</fullName>
    </recommendedName>
</protein>
<feature type="initiator methionine" description="Removed" evidence="1">
    <location>
        <position position="1"/>
    </location>
</feature>
<feature type="chain" id="PRO_0000377926" description="Putative myristoylated protein 006R">
    <location>
        <begin position="2"/>
        <end position="494"/>
    </location>
</feature>
<feature type="transmembrane region" description="Helical" evidence="1">
    <location>
        <begin position="193"/>
        <end position="213"/>
    </location>
</feature>
<feature type="transmembrane region" description="Helical" evidence="1">
    <location>
        <begin position="214"/>
        <end position="234"/>
    </location>
</feature>
<feature type="transmembrane region" description="Helical" evidence="1">
    <location>
        <begin position="465"/>
        <end position="485"/>
    </location>
</feature>
<feature type="lipid moiety-binding region" description="N-myristoyl glycine; by host" evidence="1">
    <location>
        <position position="2"/>
    </location>
</feature>
<sequence>MGSSVSKNISKVATEALARASSDILLQTDLTTDQTQVISVSDVGGDVVISGNEFIQKATINMKALMNALIQENVQQNLTLQIAQAAKSIVSGFNMFQLPNAQNEIDLFVRASIELVNTISQVCTSSVSENYLIDIKRVKGSVRIQNNTVRQFVDIFGSCVQNAVASNAIFQDLQAKLDQSATSKADGLTLWQVAALVAIVLGVPVVSVIGGIAVAGRWMFPISILAGAGCLVVWSSQANTTMADHAFSRFVRNTSDCLGTALGPVLQTLPNSNAAAQSCLSNADCVAFDWQGTVVDDKGTNKVLTPPQTTFYNKVSSICEQAVKSNPDTTRLVRLPIFAKGVGSPQSKASPPADVYLDTATTNYYFFDPPTNMWVKQGTFAHAEWSAAKNQIDWGTITPTVSTPGTPGNIYVYYGSDNPIYFYVYVKTADSWSLYTPTLRGPGLVTDTPATINVSGFKVNQRRQWLLYLGVALIIVGIFGSILAFNSRRPEERK</sequence>
<organism>
    <name type="scientific">Invertebrate iridescent virus 3</name>
    <name type="common">IIV-3</name>
    <name type="synonym">Mosquito iridescent virus</name>
    <dbReference type="NCBI Taxonomy" id="345201"/>
    <lineage>
        <taxon>Viruses</taxon>
        <taxon>Varidnaviria</taxon>
        <taxon>Bamfordvirae</taxon>
        <taxon>Nucleocytoviricota</taxon>
        <taxon>Megaviricetes</taxon>
        <taxon>Pimascovirales</taxon>
        <taxon>Iridoviridae</taxon>
        <taxon>Betairidovirinae</taxon>
        <taxon>Chloriridovirus</taxon>
    </lineage>
</organism>